<proteinExistence type="inferred from homology"/>
<accession>Q0A706</accession>
<reference key="1">
    <citation type="submission" date="2006-08" db="EMBL/GenBank/DDBJ databases">
        <title>Complete sequence of Alkalilimnicola ehrilichei MLHE-1.</title>
        <authorList>
            <person name="Copeland A."/>
            <person name="Lucas S."/>
            <person name="Lapidus A."/>
            <person name="Barry K."/>
            <person name="Detter J.C."/>
            <person name="Glavina del Rio T."/>
            <person name="Hammon N."/>
            <person name="Israni S."/>
            <person name="Dalin E."/>
            <person name="Tice H."/>
            <person name="Pitluck S."/>
            <person name="Sims D."/>
            <person name="Brettin T."/>
            <person name="Bruce D."/>
            <person name="Han C."/>
            <person name="Tapia R."/>
            <person name="Gilna P."/>
            <person name="Schmutz J."/>
            <person name="Larimer F."/>
            <person name="Land M."/>
            <person name="Hauser L."/>
            <person name="Kyrpides N."/>
            <person name="Mikhailova N."/>
            <person name="Oremland R.S."/>
            <person name="Hoeft S.E."/>
            <person name="Switzer-Blum J."/>
            <person name="Kulp T."/>
            <person name="King G."/>
            <person name="Tabita R."/>
            <person name="Witte B."/>
            <person name="Santini J.M."/>
            <person name="Basu P."/>
            <person name="Hollibaugh J.T."/>
            <person name="Xie G."/>
            <person name="Stolz J.F."/>
            <person name="Richardson P."/>
        </authorList>
    </citation>
    <scope>NUCLEOTIDE SEQUENCE [LARGE SCALE GENOMIC DNA]</scope>
    <source>
        <strain>ATCC BAA-1101 / DSM 17681 / MLHE-1</strain>
    </source>
</reference>
<keyword id="KW-0479">Metal-binding</keyword>
<keyword id="KW-0560">Oxidoreductase</keyword>
<keyword id="KW-1185">Reference proteome</keyword>
<keyword id="KW-0862">Zinc</keyword>
<organism>
    <name type="scientific">Alkalilimnicola ehrlichii (strain ATCC BAA-1101 / DSM 17681 / MLHE-1)</name>
    <dbReference type="NCBI Taxonomy" id="187272"/>
    <lineage>
        <taxon>Bacteria</taxon>
        <taxon>Pseudomonadati</taxon>
        <taxon>Pseudomonadota</taxon>
        <taxon>Gammaproteobacteria</taxon>
        <taxon>Chromatiales</taxon>
        <taxon>Ectothiorhodospiraceae</taxon>
        <taxon>Alkalilimnicola</taxon>
    </lineage>
</organism>
<dbReference type="EC" id="1.8.4.12" evidence="1"/>
<dbReference type="EMBL" id="CP000453">
    <property type="protein sequence ID" value="ABI57381.1"/>
    <property type="molecule type" value="Genomic_DNA"/>
</dbReference>
<dbReference type="RefSeq" id="WP_011629775.1">
    <property type="nucleotide sequence ID" value="NC_008340.1"/>
</dbReference>
<dbReference type="SMR" id="Q0A706"/>
<dbReference type="KEGG" id="aeh:Mlg_2039"/>
<dbReference type="eggNOG" id="COG0229">
    <property type="taxonomic scope" value="Bacteria"/>
</dbReference>
<dbReference type="HOGENOM" id="CLU_031040_8_5_6"/>
<dbReference type="OrthoDB" id="9785497at2"/>
<dbReference type="Proteomes" id="UP000001962">
    <property type="component" value="Chromosome"/>
</dbReference>
<dbReference type="GO" id="GO:0005737">
    <property type="term" value="C:cytoplasm"/>
    <property type="evidence" value="ECO:0007669"/>
    <property type="project" value="TreeGrafter"/>
</dbReference>
<dbReference type="GO" id="GO:0033743">
    <property type="term" value="F:peptide-methionine (R)-S-oxide reductase activity"/>
    <property type="evidence" value="ECO:0007669"/>
    <property type="project" value="UniProtKB-UniRule"/>
</dbReference>
<dbReference type="GO" id="GO:0008270">
    <property type="term" value="F:zinc ion binding"/>
    <property type="evidence" value="ECO:0007669"/>
    <property type="project" value="UniProtKB-UniRule"/>
</dbReference>
<dbReference type="GO" id="GO:0030091">
    <property type="term" value="P:protein repair"/>
    <property type="evidence" value="ECO:0007669"/>
    <property type="project" value="InterPro"/>
</dbReference>
<dbReference type="GO" id="GO:0006979">
    <property type="term" value="P:response to oxidative stress"/>
    <property type="evidence" value="ECO:0007669"/>
    <property type="project" value="InterPro"/>
</dbReference>
<dbReference type="FunFam" id="2.170.150.20:FF:000001">
    <property type="entry name" value="Peptide methionine sulfoxide reductase MsrB"/>
    <property type="match status" value="1"/>
</dbReference>
<dbReference type="Gene3D" id="2.170.150.20">
    <property type="entry name" value="Peptide methionine sulfoxide reductase"/>
    <property type="match status" value="1"/>
</dbReference>
<dbReference type="HAMAP" id="MF_01400">
    <property type="entry name" value="MsrB"/>
    <property type="match status" value="1"/>
</dbReference>
<dbReference type="InterPro" id="IPR028427">
    <property type="entry name" value="Met_Sox_Rdtase_MsrB"/>
</dbReference>
<dbReference type="InterPro" id="IPR002579">
    <property type="entry name" value="Met_Sox_Rdtase_MsrB_dom"/>
</dbReference>
<dbReference type="InterPro" id="IPR011057">
    <property type="entry name" value="Mss4-like_sf"/>
</dbReference>
<dbReference type="NCBIfam" id="TIGR00357">
    <property type="entry name" value="peptide-methionine (R)-S-oxide reductase MsrB"/>
    <property type="match status" value="1"/>
</dbReference>
<dbReference type="PANTHER" id="PTHR10173">
    <property type="entry name" value="METHIONINE SULFOXIDE REDUCTASE"/>
    <property type="match status" value="1"/>
</dbReference>
<dbReference type="PANTHER" id="PTHR10173:SF52">
    <property type="entry name" value="METHIONINE-R-SULFOXIDE REDUCTASE B1"/>
    <property type="match status" value="1"/>
</dbReference>
<dbReference type="Pfam" id="PF01641">
    <property type="entry name" value="SelR"/>
    <property type="match status" value="1"/>
</dbReference>
<dbReference type="SUPFAM" id="SSF51316">
    <property type="entry name" value="Mss4-like"/>
    <property type="match status" value="1"/>
</dbReference>
<dbReference type="PROSITE" id="PS51790">
    <property type="entry name" value="MSRB"/>
    <property type="match status" value="1"/>
</dbReference>
<protein>
    <recommendedName>
        <fullName evidence="1">Peptide methionine sulfoxide reductase MsrB</fullName>
        <ecNumber evidence="1">1.8.4.12</ecNumber>
    </recommendedName>
    <alternativeName>
        <fullName evidence="1">Peptide-methionine (R)-S-oxide reductase</fullName>
    </alternativeName>
</protein>
<sequence length="131" mass="14724">MVEVEKSDAEWRAQLTDEQYAVCRQGGTEQPFSGAYYHCKEPGTYHCVCCDAPLFSSRAKYDSGSGWPSFWAPISDDHLRILEDRSLGMVREEVRCARCDAHLGHVFPDGPMPTGLRYCINSVCLDLKRSG</sequence>
<name>MSRB_ALKEH</name>
<gene>
    <name evidence="1" type="primary">msrB</name>
    <name type="ordered locus">Mlg_2039</name>
</gene>
<evidence type="ECO:0000255" key="1">
    <source>
        <dbReference type="HAMAP-Rule" id="MF_01400"/>
    </source>
</evidence>
<evidence type="ECO:0000255" key="2">
    <source>
        <dbReference type="PROSITE-ProRule" id="PRU01126"/>
    </source>
</evidence>
<feature type="chain" id="PRO_1000068262" description="Peptide methionine sulfoxide reductase MsrB">
    <location>
        <begin position="1"/>
        <end position="131"/>
    </location>
</feature>
<feature type="domain" description="MsrB" evidence="2">
    <location>
        <begin position="8"/>
        <end position="130"/>
    </location>
</feature>
<feature type="active site" description="Nucleophile" evidence="2">
    <location>
        <position position="119"/>
    </location>
</feature>
<feature type="binding site" evidence="2">
    <location>
        <position position="47"/>
    </location>
    <ligand>
        <name>Zn(2+)</name>
        <dbReference type="ChEBI" id="CHEBI:29105"/>
    </ligand>
</feature>
<feature type="binding site" evidence="2">
    <location>
        <position position="50"/>
    </location>
    <ligand>
        <name>Zn(2+)</name>
        <dbReference type="ChEBI" id="CHEBI:29105"/>
    </ligand>
</feature>
<feature type="binding site" evidence="2">
    <location>
        <position position="96"/>
    </location>
    <ligand>
        <name>Zn(2+)</name>
        <dbReference type="ChEBI" id="CHEBI:29105"/>
    </ligand>
</feature>
<feature type="binding site" evidence="2">
    <location>
        <position position="99"/>
    </location>
    <ligand>
        <name>Zn(2+)</name>
        <dbReference type="ChEBI" id="CHEBI:29105"/>
    </ligand>
</feature>
<comment type="catalytic activity">
    <reaction evidence="1">
        <text>L-methionyl-[protein] + [thioredoxin]-disulfide + H2O = L-methionyl-(R)-S-oxide-[protein] + [thioredoxin]-dithiol</text>
        <dbReference type="Rhea" id="RHEA:24164"/>
        <dbReference type="Rhea" id="RHEA-COMP:10698"/>
        <dbReference type="Rhea" id="RHEA-COMP:10700"/>
        <dbReference type="Rhea" id="RHEA-COMP:12313"/>
        <dbReference type="Rhea" id="RHEA-COMP:12314"/>
        <dbReference type="ChEBI" id="CHEBI:15377"/>
        <dbReference type="ChEBI" id="CHEBI:16044"/>
        <dbReference type="ChEBI" id="CHEBI:29950"/>
        <dbReference type="ChEBI" id="CHEBI:45764"/>
        <dbReference type="ChEBI" id="CHEBI:50058"/>
        <dbReference type="EC" id="1.8.4.12"/>
    </reaction>
</comment>
<comment type="cofactor">
    <cofactor evidence="1">
        <name>Zn(2+)</name>
        <dbReference type="ChEBI" id="CHEBI:29105"/>
    </cofactor>
    <text evidence="1">Binds 1 zinc ion per subunit. The zinc ion is important for the structural integrity of the protein.</text>
</comment>
<comment type="similarity">
    <text evidence="1">Belongs to the MsrB Met sulfoxide reductase family.</text>
</comment>